<sequence>MRTLWIVAVCLMGVEGHLTQFGDMINKKTGTFGLLSYVYYGCYCGLGGKGKPQDATDRCCFVHDCCYGTVNGCDPKLSTYSYSFQNGDIVCGDDDPCLRAVCECDRVAAICFGENMNTYDKKYMLYSLFDCMEESEKC</sequence>
<protein>
    <recommendedName>
        <fullName>Acidic phospholipase A2 MVL-PLA2</fullName>
        <shortName>svPLA2</shortName>
        <ecNumber>3.1.1.4</ecNumber>
    </recommendedName>
    <alternativeName>
        <fullName>Phosphatidylcholine 2-acylhydrolase</fullName>
    </alternativeName>
</protein>
<evidence type="ECO:0000250" key="1"/>
<evidence type="ECO:0000255" key="2">
    <source>
        <dbReference type="PROSITE-ProRule" id="PRU10035"/>
    </source>
</evidence>
<evidence type="ECO:0000255" key="3">
    <source>
        <dbReference type="PROSITE-ProRule" id="PRU10036"/>
    </source>
</evidence>
<evidence type="ECO:0000269" key="4">
    <source>
    </source>
</evidence>
<evidence type="ECO:0000305" key="5"/>
<evidence type="ECO:0000305" key="6">
    <source>
    </source>
</evidence>
<comment type="function">
    <text evidence="4">Snake venom phospholipase A2 (PLA2) that displays an inhibitory effect, independent from its catalytic activity, on tumor cell adhesion and migration. This effect is mediated via specific inhibition of integrins alpha-5/beta-1 (ITGA5/ITGB1), alpha-v/beta-3 (ITGAV/ITGB3) and alpha-v/beta-6 (ITGAV/ITGB6). PLA2 catalyzes the calcium-dependent hydrolysis of the 2-acyl groups in 3-sn-phosphoglycerides.</text>
</comment>
<comment type="catalytic activity">
    <reaction evidence="2 3">
        <text>a 1,2-diacyl-sn-glycero-3-phosphocholine + H2O = a 1-acyl-sn-glycero-3-phosphocholine + a fatty acid + H(+)</text>
        <dbReference type="Rhea" id="RHEA:15801"/>
        <dbReference type="ChEBI" id="CHEBI:15377"/>
        <dbReference type="ChEBI" id="CHEBI:15378"/>
        <dbReference type="ChEBI" id="CHEBI:28868"/>
        <dbReference type="ChEBI" id="CHEBI:57643"/>
        <dbReference type="ChEBI" id="CHEBI:58168"/>
        <dbReference type="EC" id="3.1.1.4"/>
    </reaction>
</comment>
<comment type="cofactor">
    <cofactor evidence="1">
        <name>Ca(2+)</name>
        <dbReference type="ChEBI" id="CHEBI:29108"/>
    </cofactor>
    <text evidence="1">Binds 1 Ca(2+) ion.</text>
</comment>
<comment type="subcellular location">
    <subcellularLocation>
        <location evidence="1">Secreted</location>
    </subcellularLocation>
</comment>
<comment type="tissue specificity">
    <text>Expressed by the venom gland.</text>
</comment>
<comment type="mass spectrometry"/>
<comment type="miscellaneous">
    <text evidence="6">Negative results: concentrations up to 2 uM during 4 days does not induce detectable cytotoxicity on human melanoma and fibrosarcoma cell lines.</text>
</comment>
<comment type="similarity">
    <text evidence="5">Belongs to the phospholipase A2 family. Group II subfamily. D49 sub-subfamily.</text>
</comment>
<keyword id="KW-1217">Cell adhesion impairing toxin</keyword>
<keyword id="KW-0903">Direct protein sequencing</keyword>
<keyword id="KW-1015">Disulfide bond</keyword>
<keyword id="KW-0378">Hydrolase</keyword>
<keyword id="KW-0442">Lipid degradation</keyword>
<keyword id="KW-0443">Lipid metabolism</keyword>
<keyword id="KW-0479">Metal-binding</keyword>
<keyword id="KW-0964">Secreted</keyword>
<keyword id="KW-0732">Signal</keyword>
<keyword id="KW-0800">Toxin</keyword>
<accession>B5U6Z2</accession>
<dbReference type="EC" id="3.1.1.4"/>
<dbReference type="EMBL" id="FM202092">
    <property type="protein sequence ID" value="CAR40186.1"/>
    <property type="molecule type" value="mRNA"/>
</dbReference>
<dbReference type="SMR" id="B5U6Z2"/>
<dbReference type="BRENDA" id="3.1.1.4">
    <property type="organism ID" value="11952"/>
</dbReference>
<dbReference type="GO" id="GO:0005576">
    <property type="term" value="C:extracellular region"/>
    <property type="evidence" value="ECO:0007669"/>
    <property type="project" value="UniProtKB-SubCell"/>
</dbReference>
<dbReference type="GO" id="GO:0005509">
    <property type="term" value="F:calcium ion binding"/>
    <property type="evidence" value="ECO:0007669"/>
    <property type="project" value="InterPro"/>
</dbReference>
<dbReference type="GO" id="GO:0047498">
    <property type="term" value="F:calcium-dependent phospholipase A2 activity"/>
    <property type="evidence" value="ECO:0007669"/>
    <property type="project" value="TreeGrafter"/>
</dbReference>
<dbReference type="GO" id="GO:0005543">
    <property type="term" value="F:phospholipid binding"/>
    <property type="evidence" value="ECO:0007669"/>
    <property type="project" value="TreeGrafter"/>
</dbReference>
<dbReference type="GO" id="GO:0090729">
    <property type="term" value="F:toxin activity"/>
    <property type="evidence" value="ECO:0007669"/>
    <property type="project" value="UniProtKB-KW"/>
</dbReference>
<dbReference type="GO" id="GO:0050482">
    <property type="term" value="P:arachidonate secretion"/>
    <property type="evidence" value="ECO:0007669"/>
    <property type="project" value="InterPro"/>
</dbReference>
<dbReference type="GO" id="GO:0016042">
    <property type="term" value="P:lipid catabolic process"/>
    <property type="evidence" value="ECO:0007669"/>
    <property type="project" value="UniProtKB-KW"/>
</dbReference>
<dbReference type="GO" id="GO:0006644">
    <property type="term" value="P:phospholipid metabolic process"/>
    <property type="evidence" value="ECO:0007669"/>
    <property type="project" value="InterPro"/>
</dbReference>
<dbReference type="CDD" id="cd00125">
    <property type="entry name" value="PLA2c"/>
    <property type="match status" value="1"/>
</dbReference>
<dbReference type="FunFam" id="1.20.90.10:FF:000001">
    <property type="entry name" value="Basic phospholipase A2 homolog"/>
    <property type="match status" value="1"/>
</dbReference>
<dbReference type="Gene3D" id="1.20.90.10">
    <property type="entry name" value="Phospholipase A2 domain"/>
    <property type="match status" value="1"/>
</dbReference>
<dbReference type="InterPro" id="IPR001211">
    <property type="entry name" value="PLipase_A2"/>
</dbReference>
<dbReference type="InterPro" id="IPR033112">
    <property type="entry name" value="PLipase_A2_Asp_AS"/>
</dbReference>
<dbReference type="InterPro" id="IPR016090">
    <property type="entry name" value="PLipase_A2_dom"/>
</dbReference>
<dbReference type="InterPro" id="IPR036444">
    <property type="entry name" value="PLipase_A2_dom_sf"/>
</dbReference>
<dbReference type="InterPro" id="IPR033113">
    <property type="entry name" value="PLipase_A2_His_AS"/>
</dbReference>
<dbReference type="PANTHER" id="PTHR11716:SF101">
    <property type="entry name" value="BASIC PHOSPHOLIPASE A2 PA-11-LIKE"/>
    <property type="match status" value="1"/>
</dbReference>
<dbReference type="PANTHER" id="PTHR11716">
    <property type="entry name" value="PHOSPHOLIPASE A2 FAMILY MEMBER"/>
    <property type="match status" value="1"/>
</dbReference>
<dbReference type="Pfam" id="PF00068">
    <property type="entry name" value="Phospholip_A2_1"/>
    <property type="match status" value="1"/>
</dbReference>
<dbReference type="PRINTS" id="PR00389">
    <property type="entry name" value="PHPHLIPASEA2"/>
</dbReference>
<dbReference type="SMART" id="SM00085">
    <property type="entry name" value="PA2c"/>
    <property type="match status" value="1"/>
</dbReference>
<dbReference type="SUPFAM" id="SSF48619">
    <property type="entry name" value="Phospholipase A2, PLA2"/>
    <property type="match status" value="1"/>
</dbReference>
<dbReference type="PROSITE" id="PS00119">
    <property type="entry name" value="PA2_ASP"/>
    <property type="match status" value="1"/>
</dbReference>
<dbReference type="PROSITE" id="PS00118">
    <property type="entry name" value="PA2_HIS"/>
    <property type="match status" value="1"/>
</dbReference>
<proteinExistence type="evidence at protein level"/>
<feature type="signal peptide" evidence="4">
    <location>
        <begin position="1"/>
        <end position="16"/>
    </location>
</feature>
<feature type="chain" id="PRO_0000419283" description="Acidic phospholipase A2 MVL-PLA2">
    <location>
        <begin position="17"/>
        <end position="138"/>
    </location>
</feature>
<feature type="short sequence motif" description="May inhibit integrin function (Atypical cell attachment site)">
    <location>
        <begin position="86"/>
        <end position="88"/>
    </location>
</feature>
<feature type="active site" evidence="1">
    <location>
        <position position="63"/>
    </location>
</feature>
<feature type="active site" evidence="1">
    <location>
        <position position="105"/>
    </location>
</feature>
<feature type="binding site" evidence="1">
    <location>
        <position position="43"/>
    </location>
    <ligand>
        <name>Ca(2+)</name>
        <dbReference type="ChEBI" id="CHEBI:29108"/>
    </ligand>
</feature>
<feature type="binding site" evidence="1">
    <location>
        <position position="45"/>
    </location>
    <ligand>
        <name>Ca(2+)</name>
        <dbReference type="ChEBI" id="CHEBI:29108"/>
    </ligand>
</feature>
<feature type="binding site" evidence="1">
    <location>
        <position position="47"/>
    </location>
    <ligand>
        <name>Ca(2+)</name>
        <dbReference type="ChEBI" id="CHEBI:29108"/>
    </ligand>
</feature>
<feature type="binding site" evidence="1">
    <location>
        <position position="64"/>
    </location>
    <ligand>
        <name>Ca(2+)</name>
        <dbReference type="ChEBI" id="CHEBI:29108"/>
    </ligand>
</feature>
<feature type="disulfide bond" evidence="1">
    <location>
        <begin position="42"/>
        <end position="131"/>
    </location>
</feature>
<feature type="disulfide bond" evidence="1">
    <location>
        <begin position="44"/>
        <end position="60"/>
    </location>
</feature>
<feature type="disulfide bond" evidence="1">
    <location>
        <begin position="59"/>
        <end position="111"/>
    </location>
</feature>
<feature type="disulfide bond" evidence="1">
    <location>
        <begin position="65"/>
        <end position="138"/>
    </location>
</feature>
<feature type="disulfide bond" evidence="1">
    <location>
        <begin position="66"/>
        <end position="104"/>
    </location>
</feature>
<feature type="disulfide bond" evidence="1">
    <location>
        <begin position="73"/>
        <end position="97"/>
    </location>
</feature>
<feature type="disulfide bond" evidence="1">
    <location>
        <begin position="91"/>
        <end position="102"/>
    </location>
</feature>
<name>PA2A_MACLN</name>
<organism>
    <name type="scientific">Macrovipera lebetina transmediterranea</name>
    <name type="common">Blunt-nosed viper</name>
    <name type="synonym">Vipera lebetina transmediterranea</name>
    <dbReference type="NCBI Taxonomy" id="384075"/>
    <lineage>
        <taxon>Eukaryota</taxon>
        <taxon>Metazoa</taxon>
        <taxon>Chordata</taxon>
        <taxon>Craniata</taxon>
        <taxon>Vertebrata</taxon>
        <taxon>Euteleostomi</taxon>
        <taxon>Lepidosauria</taxon>
        <taxon>Squamata</taxon>
        <taxon>Bifurcata</taxon>
        <taxon>Unidentata</taxon>
        <taxon>Episquamata</taxon>
        <taxon>Toxicofera</taxon>
        <taxon>Serpentes</taxon>
        <taxon>Colubroidea</taxon>
        <taxon>Viperidae</taxon>
        <taxon>Viperinae</taxon>
        <taxon>Macrovipera</taxon>
        <taxon>Macrovipera lebetinus</taxon>
    </lineage>
</organism>
<reference key="1">
    <citation type="journal article" date="2009" name="Matrix Biol.">
        <title>MVL-PLA2, a phospholipase A2 from Macrovipera lebetina transmediterranea venom, inhibits tumor cells adhesion and migration.</title>
        <authorList>
            <person name="Bazaa A."/>
            <person name="Luis J."/>
            <person name="Srairi-Abid N."/>
            <person name="Kallech-Ziri O."/>
            <person name="Kessentini-Zouari R."/>
            <person name="Defilles C."/>
            <person name="Lissitzky J.C."/>
            <person name="El Ayeb M."/>
            <person name="Marrakchi N."/>
        </authorList>
    </citation>
    <scope>NUCLEOTIDE SEQUENCE [MRNA]</scope>
    <scope>PROTEIN SEQUENCE OF 17-34; 59-72; 83-93 AND 100-112</scope>
    <scope>FUNCTION</scope>
    <scope>MASS SPECTROMETRY</scope>
    <source>
        <tissue>Venom</tissue>
        <tissue>Venom gland</tissue>
    </source>
</reference>